<protein>
    <recommendedName>
        <fullName evidence="1">ATP synthase subunit beta</fullName>
        <ecNumber evidence="1">7.1.2.2</ecNumber>
    </recommendedName>
    <alternativeName>
        <fullName evidence="1">ATP synthase F1 sector subunit beta</fullName>
    </alternativeName>
    <alternativeName>
        <fullName evidence="1">F-ATPase subunit beta</fullName>
    </alternativeName>
</protein>
<reference key="1">
    <citation type="journal article" date="1995" name="Gene">
        <title>The ATP synthase (F1F0) of Streptomyces lividans: sequencing of the atp operon and phylogenetic considerations with subunit beta.</title>
        <authorList>
            <person name="Hensel M."/>
            <person name="Lill H."/>
            <person name="Schmid R."/>
            <person name="Deckers-Hebestreit G."/>
            <person name="Altendorf K."/>
        </authorList>
    </citation>
    <scope>NUCLEOTIDE SEQUENCE [GENOMIC DNA]</scope>
    <scope>PROTEIN SEQUENCE OF 2-15</scope>
    <source>
        <strain>66 / 1326</strain>
    </source>
</reference>
<feature type="initiator methionine" description="Removed" evidence="2">
    <location>
        <position position="1"/>
    </location>
</feature>
<feature type="chain" id="PRO_0000144479" description="ATP synthase subunit beta">
    <location>
        <begin position="2"/>
        <end position="478"/>
    </location>
</feature>
<feature type="binding site" evidence="1">
    <location>
        <begin position="164"/>
        <end position="171"/>
    </location>
    <ligand>
        <name>ATP</name>
        <dbReference type="ChEBI" id="CHEBI:30616"/>
    </ligand>
</feature>
<keyword id="KW-0066">ATP synthesis</keyword>
<keyword id="KW-0067">ATP-binding</keyword>
<keyword id="KW-1003">Cell membrane</keyword>
<keyword id="KW-0139">CF(1)</keyword>
<keyword id="KW-0903">Direct protein sequencing</keyword>
<keyword id="KW-0375">Hydrogen ion transport</keyword>
<keyword id="KW-0406">Ion transport</keyword>
<keyword id="KW-0472">Membrane</keyword>
<keyword id="KW-0547">Nucleotide-binding</keyword>
<keyword id="KW-1278">Translocase</keyword>
<keyword id="KW-0813">Transport</keyword>
<comment type="function">
    <text evidence="1">Produces ATP from ADP in the presence of a proton gradient across the membrane. The catalytic sites are hosted primarily by the beta subunits.</text>
</comment>
<comment type="catalytic activity">
    <reaction evidence="1">
        <text>ATP + H2O + 4 H(+)(in) = ADP + phosphate + 5 H(+)(out)</text>
        <dbReference type="Rhea" id="RHEA:57720"/>
        <dbReference type="ChEBI" id="CHEBI:15377"/>
        <dbReference type="ChEBI" id="CHEBI:15378"/>
        <dbReference type="ChEBI" id="CHEBI:30616"/>
        <dbReference type="ChEBI" id="CHEBI:43474"/>
        <dbReference type="ChEBI" id="CHEBI:456216"/>
        <dbReference type="EC" id="7.1.2.2"/>
    </reaction>
</comment>
<comment type="subunit">
    <text evidence="1">F-type ATPases have 2 components, CF(1) - the catalytic core - and CF(0) - the membrane proton channel. CF(1) has five subunits: alpha(3), beta(3), gamma(1), delta(1), epsilon(1). CF(0) has three main subunits: a(1), b(2) and c(9-12). The alpha and beta chains form an alternating ring which encloses part of the gamma chain. CF(1) is attached to CF(0) by a central stalk formed by the gamma and epsilon chains, while a peripheral stalk is formed by the delta and b chains.</text>
</comment>
<comment type="subcellular location">
    <subcellularLocation>
        <location evidence="1">Cell membrane</location>
        <topology evidence="1">Peripheral membrane protein</topology>
    </subcellularLocation>
</comment>
<comment type="similarity">
    <text evidence="1">Belongs to the ATPase alpha/beta chains family.</text>
</comment>
<sequence length="478" mass="52178">MTTTVETATATGRVARVIGPVVDVEFPVDAMPEIYNALHVEVADPAKEGELKTLTLEVAQHLGDGLVRTISMQPTDGLIRQAPVTDTGAAISVPVGDFTKGKVFNTLGEVLNVDEQYTGERWPIHRKAPNFDELESKTEMFETGVKVIDLLTPYVKGGKIGLFGGAGVGKTVLIQEMIYRVANNHDGVSVFAGVGERTREGNDLIDEMSESGVIDKTALVFGQMDEPPGTRLRVALAGLTMAEYFRDVQKQDVLFFIDNIFRFTQAGSEVSTLLGRMPSAVGYQPNLADEMGLLQERITSTRGHSITSMQAIYVPADDLTDPAPATTFAHLDATTVLSRPISEKGIYPAVDPLDSTSRILDPRYIAAEHYNAAMRVKNILQKYKDLQDIIAILGIDELGEEDKLVVHRARRVERFLSQNTHVAKQFTGVDGSDVPLDESIAAFNAICDGEYDHFPEQAFFMCGGIEDLKNNAKELGVS</sequence>
<accession>P0A301</accession>
<accession>P50004</accession>
<proteinExistence type="evidence at protein level"/>
<dbReference type="EC" id="7.1.2.2" evidence="1"/>
<dbReference type="EMBL" id="Z22606">
    <property type="protein sequence ID" value="CAA80327.1"/>
    <property type="molecule type" value="Genomic_DNA"/>
</dbReference>
<dbReference type="PIR" id="S37547">
    <property type="entry name" value="S37547"/>
</dbReference>
<dbReference type="SMR" id="P0A301"/>
<dbReference type="GO" id="GO:0005886">
    <property type="term" value="C:plasma membrane"/>
    <property type="evidence" value="ECO:0007669"/>
    <property type="project" value="UniProtKB-SubCell"/>
</dbReference>
<dbReference type="GO" id="GO:0045259">
    <property type="term" value="C:proton-transporting ATP synthase complex"/>
    <property type="evidence" value="ECO:0007669"/>
    <property type="project" value="UniProtKB-KW"/>
</dbReference>
<dbReference type="GO" id="GO:0005524">
    <property type="term" value="F:ATP binding"/>
    <property type="evidence" value="ECO:0007669"/>
    <property type="project" value="UniProtKB-UniRule"/>
</dbReference>
<dbReference type="GO" id="GO:0016887">
    <property type="term" value="F:ATP hydrolysis activity"/>
    <property type="evidence" value="ECO:0007669"/>
    <property type="project" value="InterPro"/>
</dbReference>
<dbReference type="GO" id="GO:0046933">
    <property type="term" value="F:proton-transporting ATP synthase activity, rotational mechanism"/>
    <property type="evidence" value="ECO:0007669"/>
    <property type="project" value="UniProtKB-UniRule"/>
</dbReference>
<dbReference type="CDD" id="cd18110">
    <property type="entry name" value="ATP-synt_F1_beta_C"/>
    <property type="match status" value="1"/>
</dbReference>
<dbReference type="CDD" id="cd18115">
    <property type="entry name" value="ATP-synt_F1_beta_N"/>
    <property type="match status" value="1"/>
</dbReference>
<dbReference type="CDD" id="cd01133">
    <property type="entry name" value="F1-ATPase_beta_CD"/>
    <property type="match status" value="1"/>
</dbReference>
<dbReference type="FunFam" id="1.10.1140.10:FF:000001">
    <property type="entry name" value="ATP synthase subunit beta"/>
    <property type="match status" value="1"/>
</dbReference>
<dbReference type="FunFam" id="2.40.10.170:FF:000005">
    <property type="entry name" value="ATP synthase subunit beta"/>
    <property type="match status" value="1"/>
</dbReference>
<dbReference type="FunFam" id="3.40.50.300:FF:000004">
    <property type="entry name" value="ATP synthase subunit beta"/>
    <property type="match status" value="1"/>
</dbReference>
<dbReference type="Gene3D" id="2.40.10.170">
    <property type="match status" value="1"/>
</dbReference>
<dbReference type="Gene3D" id="1.10.1140.10">
    <property type="entry name" value="Bovine Mitochondrial F1-atpase, Atp Synthase Beta Chain, Chain D, domain 3"/>
    <property type="match status" value="1"/>
</dbReference>
<dbReference type="Gene3D" id="3.40.50.300">
    <property type="entry name" value="P-loop containing nucleotide triphosphate hydrolases"/>
    <property type="match status" value="1"/>
</dbReference>
<dbReference type="HAMAP" id="MF_01347">
    <property type="entry name" value="ATP_synth_beta_bact"/>
    <property type="match status" value="1"/>
</dbReference>
<dbReference type="InterPro" id="IPR003593">
    <property type="entry name" value="AAA+_ATPase"/>
</dbReference>
<dbReference type="InterPro" id="IPR055190">
    <property type="entry name" value="ATP-synt_VA_C"/>
</dbReference>
<dbReference type="InterPro" id="IPR005722">
    <property type="entry name" value="ATP_synth_F1_bsu"/>
</dbReference>
<dbReference type="InterPro" id="IPR020003">
    <property type="entry name" value="ATPase_a/bsu_AS"/>
</dbReference>
<dbReference type="InterPro" id="IPR050053">
    <property type="entry name" value="ATPase_alpha/beta_chains"/>
</dbReference>
<dbReference type="InterPro" id="IPR004100">
    <property type="entry name" value="ATPase_F1/V1/A1_a/bsu_N"/>
</dbReference>
<dbReference type="InterPro" id="IPR036121">
    <property type="entry name" value="ATPase_F1/V1/A1_a/bsu_N_sf"/>
</dbReference>
<dbReference type="InterPro" id="IPR000194">
    <property type="entry name" value="ATPase_F1/V1/A1_a/bsu_nucl-bd"/>
</dbReference>
<dbReference type="InterPro" id="IPR024034">
    <property type="entry name" value="ATPase_F1/V1_b/a_C"/>
</dbReference>
<dbReference type="InterPro" id="IPR027417">
    <property type="entry name" value="P-loop_NTPase"/>
</dbReference>
<dbReference type="NCBIfam" id="TIGR01039">
    <property type="entry name" value="atpD"/>
    <property type="match status" value="1"/>
</dbReference>
<dbReference type="PANTHER" id="PTHR15184">
    <property type="entry name" value="ATP SYNTHASE"/>
    <property type="match status" value="1"/>
</dbReference>
<dbReference type="PANTHER" id="PTHR15184:SF71">
    <property type="entry name" value="ATP SYNTHASE SUBUNIT BETA, MITOCHONDRIAL"/>
    <property type="match status" value="1"/>
</dbReference>
<dbReference type="Pfam" id="PF00006">
    <property type="entry name" value="ATP-synt_ab"/>
    <property type="match status" value="1"/>
</dbReference>
<dbReference type="Pfam" id="PF02874">
    <property type="entry name" value="ATP-synt_ab_N"/>
    <property type="match status" value="1"/>
</dbReference>
<dbReference type="Pfam" id="PF22919">
    <property type="entry name" value="ATP-synt_VA_C"/>
    <property type="match status" value="1"/>
</dbReference>
<dbReference type="SMART" id="SM00382">
    <property type="entry name" value="AAA"/>
    <property type="match status" value="1"/>
</dbReference>
<dbReference type="SUPFAM" id="SSF47917">
    <property type="entry name" value="C-terminal domain of alpha and beta subunits of F1 ATP synthase"/>
    <property type="match status" value="1"/>
</dbReference>
<dbReference type="SUPFAM" id="SSF50615">
    <property type="entry name" value="N-terminal domain of alpha and beta subunits of F1 ATP synthase"/>
    <property type="match status" value="1"/>
</dbReference>
<dbReference type="SUPFAM" id="SSF52540">
    <property type="entry name" value="P-loop containing nucleoside triphosphate hydrolases"/>
    <property type="match status" value="1"/>
</dbReference>
<dbReference type="PROSITE" id="PS00152">
    <property type="entry name" value="ATPASE_ALPHA_BETA"/>
    <property type="match status" value="1"/>
</dbReference>
<evidence type="ECO:0000255" key="1">
    <source>
        <dbReference type="HAMAP-Rule" id="MF_01347"/>
    </source>
</evidence>
<evidence type="ECO:0000269" key="2">
    <source>
    </source>
</evidence>
<organism>
    <name type="scientific">Streptomyces lividans</name>
    <dbReference type="NCBI Taxonomy" id="1916"/>
    <lineage>
        <taxon>Bacteria</taxon>
        <taxon>Bacillati</taxon>
        <taxon>Actinomycetota</taxon>
        <taxon>Actinomycetes</taxon>
        <taxon>Kitasatosporales</taxon>
        <taxon>Streptomycetaceae</taxon>
        <taxon>Streptomyces</taxon>
    </lineage>
</organism>
<gene>
    <name evidence="1" type="primary">atpD</name>
</gene>
<name>ATPB_STRLI</name>